<comment type="function">
    <text evidence="1">Cell wall formation.</text>
</comment>
<comment type="catalytic activity">
    <reaction evidence="1">
        <text>UDP-N-acetyl-alpha-D-muramate + L-alanine + ATP = UDP-N-acetyl-alpha-D-muramoyl-L-alanine + ADP + phosphate + H(+)</text>
        <dbReference type="Rhea" id="RHEA:23372"/>
        <dbReference type="ChEBI" id="CHEBI:15378"/>
        <dbReference type="ChEBI" id="CHEBI:30616"/>
        <dbReference type="ChEBI" id="CHEBI:43474"/>
        <dbReference type="ChEBI" id="CHEBI:57972"/>
        <dbReference type="ChEBI" id="CHEBI:70757"/>
        <dbReference type="ChEBI" id="CHEBI:83898"/>
        <dbReference type="ChEBI" id="CHEBI:456216"/>
        <dbReference type="EC" id="6.3.2.8"/>
    </reaction>
</comment>
<comment type="pathway">
    <text evidence="1">Cell wall biogenesis; peptidoglycan biosynthesis.</text>
</comment>
<comment type="subcellular location">
    <subcellularLocation>
        <location evidence="1">Cytoplasm</location>
    </subcellularLocation>
</comment>
<comment type="similarity">
    <text evidence="1">Belongs to the MurCDEF family.</text>
</comment>
<keyword id="KW-0067">ATP-binding</keyword>
<keyword id="KW-0131">Cell cycle</keyword>
<keyword id="KW-0132">Cell division</keyword>
<keyword id="KW-0133">Cell shape</keyword>
<keyword id="KW-0961">Cell wall biogenesis/degradation</keyword>
<keyword id="KW-0963">Cytoplasm</keyword>
<keyword id="KW-0436">Ligase</keyword>
<keyword id="KW-0547">Nucleotide-binding</keyword>
<keyword id="KW-0573">Peptidoglycan synthesis</keyword>
<name>MURC_PSEAB</name>
<sequence>MVKEPNGVTRTMRRIRRIHFVGIGGAGMCGIAEVLLNLGYEVSGSDLKASAVTERLEKFGAQIFIGHQAENADGADVLVVSSAINRANPEVASALERRIPVVPRAEMLAELMRYRHGIAVAGTHGKTTTTSLIASVFAAGGLDPTFVIGGRLNAAGTNAQLGASRYLVAEADESDASFLHLQPMVAVVTNIDADHMATYGGDFNKLKKTFVEFLHNLPFYGLAVMCVDDPVVREILPQIARPTVTYGLSEDADVRAINIRQEGMRTWFTVLRPEREPLDVSVNMPGLHNVLNSLATIVIATDEGISDEAIVQGLSGFQGVGRRFQVYGELQVEGGSVMLVDDYGHHPREVAAVIKAIRGGWPERRLVMVYQPHRYTRTRDLYEDFVQVLGEANVLLLMEVYPAGEEPIPGADSRQLCHSIRQRGQLDPIYFERDADLAPLVKPLLRAGDILLCQGAGDVGGLAPQLIKNPLFAGKGGKGA</sequence>
<organism>
    <name type="scientific">Pseudomonas aeruginosa (strain UCBPP-PA14)</name>
    <dbReference type="NCBI Taxonomy" id="208963"/>
    <lineage>
        <taxon>Bacteria</taxon>
        <taxon>Pseudomonadati</taxon>
        <taxon>Pseudomonadota</taxon>
        <taxon>Gammaproteobacteria</taxon>
        <taxon>Pseudomonadales</taxon>
        <taxon>Pseudomonadaceae</taxon>
        <taxon>Pseudomonas</taxon>
    </lineage>
</organism>
<gene>
    <name evidence="1" type="primary">murC</name>
    <name type="ordered locus">PA14_57330</name>
</gene>
<evidence type="ECO:0000255" key="1">
    <source>
        <dbReference type="HAMAP-Rule" id="MF_00046"/>
    </source>
</evidence>
<reference key="1">
    <citation type="journal article" date="2006" name="Genome Biol.">
        <title>Genomic analysis reveals that Pseudomonas aeruginosa virulence is combinatorial.</title>
        <authorList>
            <person name="Lee D.G."/>
            <person name="Urbach J.M."/>
            <person name="Wu G."/>
            <person name="Liberati N.T."/>
            <person name="Feinbaum R.L."/>
            <person name="Miyata S."/>
            <person name="Diggins L.T."/>
            <person name="He J."/>
            <person name="Saucier M."/>
            <person name="Deziel E."/>
            <person name="Friedman L."/>
            <person name="Li L."/>
            <person name="Grills G."/>
            <person name="Montgomery K."/>
            <person name="Kucherlapati R."/>
            <person name="Rahme L.G."/>
            <person name="Ausubel F.M."/>
        </authorList>
    </citation>
    <scope>NUCLEOTIDE SEQUENCE [LARGE SCALE GENOMIC DNA]</scope>
    <source>
        <strain>UCBPP-PA14</strain>
    </source>
</reference>
<feature type="chain" id="PRO_0000336856" description="UDP-N-acetylmuramate--L-alanine ligase">
    <location>
        <begin position="1"/>
        <end position="480"/>
    </location>
</feature>
<feature type="binding site" evidence="1">
    <location>
        <begin position="122"/>
        <end position="128"/>
    </location>
    <ligand>
        <name>ATP</name>
        <dbReference type="ChEBI" id="CHEBI:30616"/>
    </ligand>
</feature>
<protein>
    <recommendedName>
        <fullName evidence="1">UDP-N-acetylmuramate--L-alanine ligase</fullName>
        <ecNumber evidence="1">6.3.2.8</ecNumber>
    </recommendedName>
    <alternativeName>
        <fullName evidence="1">UDP-N-acetylmuramoyl-L-alanine synthetase</fullName>
    </alternativeName>
</protein>
<accession>Q02H29</accession>
<proteinExistence type="inferred from homology"/>
<dbReference type="EC" id="6.3.2.8" evidence="1"/>
<dbReference type="EMBL" id="CP000438">
    <property type="protein sequence ID" value="ABJ13681.1"/>
    <property type="molecule type" value="Genomic_DNA"/>
</dbReference>
<dbReference type="RefSeq" id="WP_003094121.1">
    <property type="nucleotide sequence ID" value="NZ_CP034244.1"/>
</dbReference>
<dbReference type="SMR" id="Q02H29"/>
<dbReference type="KEGG" id="pau:PA14_57330"/>
<dbReference type="PseudoCAP" id="PA14_57330"/>
<dbReference type="HOGENOM" id="CLU_028104_2_2_6"/>
<dbReference type="BioCyc" id="PAER208963:G1G74-4828-MONOMER"/>
<dbReference type="UniPathway" id="UPA00219"/>
<dbReference type="Proteomes" id="UP000000653">
    <property type="component" value="Chromosome"/>
</dbReference>
<dbReference type="GO" id="GO:0005737">
    <property type="term" value="C:cytoplasm"/>
    <property type="evidence" value="ECO:0007669"/>
    <property type="project" value="UniProtKB-SubCell"/>
</dbReference>
<dbReference type="GO" id="GO:0005524">
    <property type="term" value="F:ATP binding"/>
    <property type="evidence" value="ECO:0007669"/>
    <property type="project" value="UniProtKB-UniRule"/>
</dbReference>
<dbReference type="GO" id="GO:0008763">
    <property type="term" value="F:UDP-N-acetylmuramate-L-alanine ligase activity"/>
    <property type="evidence" value="ECO:0007669"/>
    <property type="project" value="UniProtKB-UniRule"/>
</dbReference>
<dbReference type="GO" id="GO:0051301">
    <property type="term" value="P:cell division"/>
    <property type="evidence" value="ECO:0007669"/>
    <property type="project" value="UniProtKB-KW"/>
</dbReference>
<dbReference type="GO" id="GO:0071555">
    <property type="term" value="P:cell wall organization"/>
    <property type="evidence" value="ECO:0007669"/>
    <property type="project" value="UniProtKB-KW"/>
</dbReference>
<dbReference type="GO" id="GO:0009252">
    <property type="term" value="P:peptidoglycan biosynthetic process"/>
    <property type="evidence" value="ECO:0007669"/>
    <property type="project" value="UniProtKB-UniRule"/>
</dbReference>
<dbReference type="GO" id="GO:0008360">
    <property type="term" value="P:regulation of cell shape"/>
    <property type="evidence" value="ECO:0007669"/>
    <property type="project" value="UniProtKB-KW"/>
</dbReference>
<dbReference type="FunFam" id="3.40.1190.10:FF:000001">
    <property type="entry name" value="UDP-N-acetylmuramate--L-alanine ligase"/>
    <property type="match status" value="1"/>
</dbReference>
<dbReference type="Gene3D" id="3.90.190.20">
    <property type="entry name" value="Mur ligase, C-terminal domain"/>
    <property type="match status" value="1"/>
</dbReference>
<dbReference type="Gene3D" id="3.40.1190.10">
    <property type="entry name" value="Mur-like, catalytic domain"/>
    <property type="match status" value="1"/>
</dbReference>
<dbReference type="Gene3D" id="3.40.50.720">
    <property type="entry name" value="NAD(P)-binding Rossmann-like Domain"/>
    <property type="match status" value="1"/>
</dbReference>
<dbReference type="HAMAP" id="MF_00046">
    <property type="entry name" value="MurC"/>
    <property type="match status" value="1"/>
</dbReference>
<dbReference type="InterPro" id="IPR036565">
    <property type="entry name" value="Mur-like_cat_sf"/>
</dbReference>
<dbReference type="InterPro" id="IPR004101">
    <property type="entry name" value="Mur_ligase_C"/>
</dbReference>
<dbReference type="InterPro" id="IPR036615">
    <property type="entry name" value="Mur_ligase_C_dom_sf"/>
</dbReference>
<dbReference type="InterPro" id="IPR013221">
    <property type="entry name" value="Mur_ligase_cen"/>
</dbReference>
<dbReference type="InterPro" id="IPR000713">
    <property type="entry name" value="Mur_ligase_N"/>
</dbReference>
<dbReference type="InterPro" id="IPR050061">
    <property type="entry name" value="MurCDEF_pg_biosynth"/>
</dbReference>
<dbReference type="InterPro" id="IPR005758">
    <property type="entry name" value="UDP-N-AcMur_Ala_ligase_MurC"/>
</dbReference>
<dbReference type="NCBIfam" id="TIGR01082">
    <property type="entry name" value="murC"/>
    <property type="match status" value="1"/>
</dbReference>
<dbReference type="PANTHER" id="PTHR43445:SF3">
    <property type="entry name" value="UDP-N-ACETYLMURAMATE--L-ALANINE LIGASE"/>
    <property type="match status" value="1"/>
</dbReference>
<dbReference type="PANTHER" id="PTHR43445">
    <property type="entry name" value="UDP-N-ACETYLMURAMATE--L-ALANINE LIGASE-RELATED"/>
    <property type="match status" value="1"/>
</dbReference>
<dbReference type="Pfam" id="PF01225">
    <property type="entry name" value="Mur_ligase"/>
    <property type="match status" value="1"/>
</dbReference>
<dbReference type="Pfam" id="PF02875">
    <property type="entry name" value="Mur_ligase_C"/>
    <property type="match status" value="1"/>
</dbReference>
<dbReference type="Pfam" id="PF08245">
    <property type="entry name" value="Mur_ligase_M"/>
    <property type="match status" value="1"/>
</dbReference>
<dbReference type="SUPFAM" id="SSF51984">
    <property type="entry name" value="MurCD N-terminal domain"/>
    <property type="match status" value="1"/>
</dbReference>
<dbReference type="SUPFAM" id="SSF53623">
    <property type="entry name" value="MurD-like peptide ligases, catalytic domain"/>
    <property type="match status" value="1"/>
</dbReference>
<dbReference type="SUPFAM" id="SSF53244">
    <property type="entry name" value="MurD-like peptide ligases, peptide-binding domain"/>
    <property type="match status" value="1"/>
</dbReference>